<name>RL24_MYCPA</name>
<gene>
    <name evidence="1" type="primary">rplX</name>
    <name type="ordered locus">MAP_4178</name>
</gene>
<organism>
    <name type="scientific">Mycolicibacterium paratuberculosis (strain ATCC BAA-968 / K-10)</name>
    <name type="common">Mycobacterium paratuberculosis</name>
    <dbReference type="NCBI Taxonomy" id="262316"/>
    <lineage>
        <taxon>Bacteria</taxon>
        <taxon>Bacillati</taxon>
        <taxon>Actinomycetota</taxon>
        <taxon>Actinomycetes</taxon>
        <taxon>Mycobacteriales</taxon>
        <taxon>Mycobacteriaceae</taxon>
        <taxon>Mycobacterium</taxon>
        <taxon>Mycobacterium avium complex (MAC)</taxon>
    </lineage>
</organism>
<protein>
    <recommendedName>
        <fullName evidence="1">Large ribosomal subunit protein uL24</fullName>
    </recommendedName>
    <alternativeName>
        <fullName evidence="2">50S ribosomal protein L24</fullName>
    </alternativeName>
</protein>
<comment type="function">
    <text evidence="1">One of two assembly initiator proteins, it binds directly to the 5'-end of the 23S rRNA, where it nucleates assembly of the 50S subunit.</text>
</comment>
<comment type="function">
    <text evidence="1">One of the proteins that surrounds the polypeptide exit tunnel on the outside of the subunit.</text>
</comment>
<comment type="subunit">
    <text evidence="1">Part of the 50S ribosomal subunit.</text>
</comment>
<comment type="similarity">
    <text evidence="1">Belongs to the universal ribosomal protein uL24 family.</text>
</comment>
<sequence>MKVRKGDTVLVIAGKDKGAKGKVLKAYPDRERVLVEGVNRIKKHTAISTNQRGAQSGGIVTQEAPIHVSNVMVVDSDGKPARVGYRLDEETGKRVRISKRNGKDI</sequence>
<accession>P60742</accession>
<proteinExistence type="inferred from homology"/>
<dbReference type="EMBL" id="AE016958">
    <property type="protein sequence ID" value="AAS06728.1"/>
    <property type="molecule type" value="Genomic_DNA"/>
</dbReference>
<dbReference type="RefSeq" id="WP_003873501.1">
    <property type="nucleotide sequence ID" value="NZ_CP106873.1"/>
</dbReference>
<dbReference type="SMR" id="P60742"/>
<dbReference type="STRING" id="262316.MAP_4178"/>
<dbReference type="GeneID" id="75271968"/>
<dbReference type="KEGG" id="mpa:MAP_4178"/>
<dbReference type="eggNOG" id="COG0198">
    <property type="taxonomic scope" value="Bacteria"/>
</dbReference>
<dbReference type="HOGENOM" id="CLU_093315_2_0_11"/>
<dbReference type="Proteomes" id="UP000000580">
    <property type="component" value="Chromosome"/>
</dbReference>
<dbReference type="GO" id="GO:1990904">
    <property type="term" value="C:ribonucleoprotein complex"/>
    <property type="evidence" value="ECO:0007669"/>
    <property type="project" value="UniProtKB-KW"/>
</dbReference>
<dbReference type="GO" id="GO:0005840">
    <property type="term" value="C:ribosome"/>
    <property type="evidence" value="ECO:0007669"/>
    <property type="project" value="UniProtKB-KW"/>
</dbReference>
<dbReference type="GO" id="GO:0019843">
    <property type="term" value="F:rRNA binding"/>
    <property type="evidence" value="ECO:0007669"/>
    <property type="project" value="UniProtKB-UniRule"/>
</dbReference>
<dbReference type="GO" id="GO:0003735">
    <property type="term" value="F:structural constituent of ribosome"/>
    <property type="evidence" value="ECO:0007669"/>
    <property type="project" value="InterPro"/>
</dbReference>
<dbReference type="GO" id="GO:0006412">
    <property type="term" value="P:translation"/>
    <property type="evidence" value="ECO:0007669"/>
    <property type="project" value="UniProtKB-UniRule"/>
</dbReference>
<dbReference type="CDD" id="cd06089">
    <property type="entry name" value="KOW_RPL26"/>
    <property type="match status" value="1"/>
</dbReference>
<dbReference type="FunFam" id="2.30.30.30:FF:000004">
    <property type="entry name" value="50S ribosomal protein L24"/>
    <property type="match status" value="1"/>
</dbReference>
<dbReference type="Gene3D" id="2.30.30.30">
    <property type="match status" value="1"/>
</dbReference>
<dbReference type="HAMAP" id="MF_01326_B">
    <property type="entry name" value="Ribosomal_uL24_B"/>
    <property type="match status" value="1"/>
</dbReference>
<dbReference type="InterPro" id="IPR005824">
    <property type="entry name" value="KOW"/>
</dbReference>
<dbReference type="InterPro" id="IPR014722">
    <property type="entry name" value="Rib_uL2_dom2"/>
</dbReference>
<dbReference type="InterPro" id="IPR003256">
    <property type="entry name" value="Ribosomal_uL24"/>
</dbReference>
<dbReference type="InterPro" id="IPR005825">
    <property type="entry name" value="Ribosomal_uL24_CS"/>
</dbReference>
<dbReference type="InterPro" id="IPR041988">
    <property type="entry name" value="Ribosomal_uL24_KOW"/>
</dbReference>
<dbReference type="InterPro" id="IPR008991">
    <property type="entry name" value="Translation_prot_SH3-like_sf"/>
</dbReference>
<dbReference type="NCBIfam" id="TIGR01079">
    <property type="entry name" value="rplX_bact"/>
    <property type="match status" value="1"/>
</dbReference>
<dbReference type="PANTHER" id="PTHR12903">
    <property type="entry name" value="MITOCHONDRIAL RIBOSOMAL PROTEIN L24"/>
    <property type="match status" value="1"/>
</dbReference>
<dbReference type="Pfam" id="PF00467">
    <property type="entry name" value="KOW"/>
    <property type="match status" value="1"/>
</dbReference>
<dbReference type="Pfam" id="PF17136">
    <property type="entry name" value="ribosomal_L24"/>
    <property type="match status" value="1"/>
</dbReference>
<dbReference type="SMART" id="SM00739">
    <property type="entry name" value="KOW"/>
    <property type="match status" value="1"/>
</dbReference>
<dbReference type="SUPFAM" id="SSF50104">
    <property type="entry name" value="Translation proteins SH3-like domain"/>
    <property type="match status" value="1"/>
</dbReference>
<dbReference type="PROSITE" id="PS01108">
    <property type="entry name" value="RIBOSOMAL_L24"/>
    <property type="match status" value="1"/>
</dbReference>
<keyword id="KW-1185">Reference proteome</keyword>
<keyword id="KW-0687">Ribonucleoprotein</keyword>
<keyword id="KW-0689">Ribosomal protein</keyword>
<keyword id="KW-0694">RNA-binding</keyword>
<keyword id="KW-0699">rRNA-binding</keyword>
<reference key="1">
    <citation type="journal article" date="2005" name="Proc. Natl. Acad. Sci. U.S.A.">
        <title>The complete genome sequence of Mycobacterium avium subspecies paratuberculosis.</title>
        <authorList>
            <person name="Li L."/>
            <person name="Bannantine J.P."/>
            <person name="Zhang Q."/>
            <person name="Amonsin A."/>
            <person name="May B.J."/>
            <person name="Alt D."/>
            <person name="Banerji N."/>
            <person name="Kanjilal S."/>
            <person name="Kapur V."/>
        </authorList>
    </citation>
    <scope>NUCLEOTIDE SEQUENCE [LARGE SCALE GENOMIC DNA]</scope>
    <source>
        <strain>ATCC BAA-968 / K-10</strain>
    </source>
</reference>
<evidence type="ECO:0000255" key="1">
    <source>
        <dbReference type="HAMAP-Rule" id="MF_01326"/>
    </source>
</evidence>
<evidence type="ECO:0000305" key="2"/>
<feature type="chain" id="PRO_0000130680" description="Large ribosomal subunit protein uL24">
    <location>
        <begin position="1"/>
        <end position="105"/>
    </location>
</feature>